<keyword id="KW-0997">Cell inner membrane</keyword>
<keyword id="KW-1003">Cell membrane</keyword>
<keyword id="KW-0472">Membrane</keyword>
<keyword id="KW-0653">Protein transport</keyword>
<keyword id="KW-1185">Reference proteome</keyword>
<keyword id="KW-0811">Translocation</keyword>
<keyword id="KW-0812">Transmembrane</keyword>
<keyword id="KW-1133">Transmembrane helix</keyword>
<keyword id="KW-0813">Transport</keyword>
<protein>
    <recommendedName>
        <fullName evidence="1">Sec-independent protein translocase protein TatA</fullName>
    </recommendedName>
</protein>
<evidence type="ECO:0000255" key="1">
    <source>
        <dbReference type="HAMAP-Rule" id="MF_00236"/>
    </source>
</evidence>
<evidence type="ECO:0000256" key="2">
    <source>
        <dbReference type="SAM" id="MobiDB-lite"/>
    </source>
</evidence>
<accession>A8G0T0</accession>
<feature type="chain" id="PRO_1000078322" description="Sec-independent protein translocase protein TatA">
    <location>
        <begin position="1"/>
        <end position="78"/>
    </location>
</feature>
<feature type="transmembrane region" description="Helical" evidence="1">
    <location>
        <begin position="1"/>
        <end position="21"/>
    </location>
</feature>
<feature type="region of interest" description="Disordered" evidence="2">
    <location>
        <begin position="40"/>
        <end position="78"/>
    </location>
</feature>
<feature type="compositionally biased region" description="Basic and acidic residues" evidence="2">
    <location>
        <begin position="46"/>
        <end position="78"/>
    </location>
</feature>
<sequence>MGGISIWQLLIVALIVVLLFGTKKLRSLGGDLGGAVKGFKSAMSSEEEKKAIEDSASEKTAQTEEKKTESKDKDKEQV</sequence>
<reference key="1">
    <citation type="submission" date="2007-08" db="EMBL/GenBank/DDBJ databases">
        <title>Complete sequence of Shewanella sediminis HAW-EB3.</title>
        <authorList>
            <consortium name="US DOE Joint Genome Institute"/>
            <person name="Copeland A."/>
            <person name="Lucas S."/>
            <person name="Lapidus A."/>
            <person name="Barry K."/>
            <person name="Glavina del Rio T."/>
            <person name="Dalin E."/>
            <person name="Tice H."/>
            <person name="Pitluck S."/>
            <person name="Chertkov O."/>
            <person name="Brettin T."/>
            <person name="Bruce D."/>
            <person name="Detter J.C."/>
            <person name="Han C."/>
            <person name="Schmutz J."/>
            <person name="Larimer F."/>
            <person name="Land M."/>
            <person name="Hauser L."/>
            <person name="Kyrpides N."/>
            <person name="Kim E."/>
            <person name="Zhao J.-S."/>
            <person name="Richardson P."/>
        </authorList>
    </citation>
    <scope>NUCLEOTIDE SEQUENCE [LARGE SCALE GENOMIC DNA]</scope>
    <source>
        <strain>HAW-EB3</strain>
    </source>
</reference>
<comment type="function">
    <text evidence="1">Part of the twin-arginine translocation (Tat) system that transports large folded proteins containing a characteristic twin-arginine motif in their signal peptide across membranes. TatA could form the protein-conducting channel of the Tat system.</text>
</comment>
<comment type="subunit">
    <text evidence="1">The Tat system comprises two distinct complexes: a TatABC complex, containing multiple copies of TatA, TatB and TatC subunits, and a separate TatA complex, containing only TatA subunits. Substrates initially bind to the TatABC complex, which probably triggers association of the separate TatA complex to form the active translocon.</text>
</comment>
<comment type="subcellular location">
    <subcellularLocation>
        <location evidence="1">Cell inner membrane</location>
        <topology evidence="1">Single-pass membrane protein</topology>
    </subcellularLocation>
</comment>
<comment type="similarity">
    <text evidence="1">Belongs to the TatA/E family.</text>
</comment>
<dbReference type="EMBL" id="CP000821">
    <property type="protein sequence ID" value="ABV38703.1"/>
    <property type="molecule type" value="Genomic_DNA"/>
</dbReference>
<dbReference type="RefSeq" id="WP_012144433.1">
    <property type="nucleotide sequence ID" value="NC_009831.1"/>
</dbReference>
<dbReference type="SMR" id="A8G0T0"/>
<dbReference type="STRING" id="425104.Ssed_4099"/>
<dbReference type="KEGG" id="sse:Ssed_4099"/>
<dbReference type="eggNOG" id="COG1826">
    <property type="taxonomic scope" value="Bacteria"/>
</dbReference>
<dbReference type="HOGENOM" id="CLU_086034_5_3_6"/>
<dbReference type="OrthoDB" id="7066617at2"/>
<dbReference type="Proteomes" id="UP000002015">
    <property type="component" value="Chromosome"/>
</dbReference>
<dbReference type="GO" id="GO:0033281">
    <property type="term" value="C:TAT protein transport complex"/>
    <property type="evidence" value="ECO:0007669"/>
    <property type="project" value="UniProtKB-UniRule"/>
</dbReference>
<dbReference type="GO" id="GO:0008320">
    <property type="term" value="F:protein transmembrane transporter activity"/>
    <property type="evidence" value="ECO:0007669"/>
    <property type="project" value="UniProtKB-UniRule"/>
</dbReference>
<dbReference type="GO" id="GO:0043953">
    <property type="term" value="P:protein transport by the Tat complex"/>
    <property type="evidence" value="ECO:0007669"/>
    <property type="project" value="UniProtKB-UniRule"/>
</dbReference>
<dbReference type="Gene3D" id="1.20.5.3310">
    <property type="match status" value="1"/>
</dbReference>
<dbReference type="HAMAP" id="MF_00236">
    <property type="entry name" value="TatA_E"/>
    <property type="match status" value="1"/>
</dbReference>
<dbReference type="InterPro" id="IPR003369">
    <property type="entry name" value="TatA/B/E"/>
</dbReference>
<dbReference type="InterPro" id="IPR006312">
    <property type="entry name" value="TatA/E"/>
</dbReference>
<dbReference type="NCBIfam" id="NF002813">
    <property type="entry name" value="PRK02958.1"/>
    <property type="match status" value="1"/>
</dbReference>
<dbReference type="NCBIfam" id="TIGR01411">
    <property type="entry name" value="tatAE"/>
    <property type="match status" value="1"/>
</dbReference>
<dbReference type="PANTHER" id="PTHR42982">
    <property type="entry name" value="SEC-INDEPENDENT PROTEIN TRANSLOCASE PROTEIN TATA"/>
    <property type="match status" value="1"/>
</dbReference>
<dbReference type="PANTHER" id="PTHR42982:SF1">
    <property type="entry name" value="SEC-INDEPENDENT PROTEIN TRANSLOCASE PROTEIN TATA"/>
    <property type="match status" value="1"/>
</dbReference>
<dbReference type="Pfam" id="PF02416">
    <property type="entry name" value="TatA_B_E"/>
    <property type="match status" value="1"/>
</dbReference>
<proteinExistence type="inferred from homology"/>
<name>TATA_SHESH</name>
<gene>
    <name evidence="1" type="primary">tatA</name>
    <name type="ordered locus">Ssed_4099</name>
</gene>
<organism>
    <name type="scientific">Shewanella sediminis (strain HAW-EB3)</name>
    <dbReference type="NCBI Taxonomy" id="425104"/>
    <lineage>
        <taxon>Bacteria</taxon>
        <taxon>Pseudomonadati</taxon>
        <taxon>Pseudomonadota</taxon>
        <taxon>Gammaproteobacteria</taxon>
        <taxon>Alteromonadales</taxon>
        <taxon>Shewanellaceae</taxon>
        <taxon>Shewanella</taxon>
    </lineage>
</organism>